<reference key="1">
    <citation type="journal article" date="2001" name="Mol. Biol. Evol.">
        <title>Mechanisms for evolving hypervariability: the case of conopeptides.</title>
        <authorList>
            <person name="Conticello S.G."/>
            <person name="Gilad Y."/>
            <person name="Avidan N."/>
            <person name="Ben-Asher E."/>
            <person name="Levy Z."/>
            <person name="Fainzilber M."/>
        </authorList>
    </citation>
    <scope>NUCLEOTIDE SEQUENCE [MRNA]</scope>
    <source>
        <tissue>Venom duct</tissue>
    </source>
</reference>
<proteinExistence type="evidence at transcript level"/>
<protein>
    <recommendedName>
        <fullName>Conotoxin ArMSGL-0121</fullName>
    </recommendedName>
</protein>
<comment type="subcellular location">
    <subcellularLocation>
        <location evidence="1">Secreted</location>
    </subcellularLocation>
</comment>
<comment type="tissue specificity">
    <text>Expressed by the venom duct.</text>
</comment>
<comment type="domain">
    <text evidence="1">The presence of a 'disulfide through disulfide knot' structurally defines this protein as a knottin.</text>
</comment>
<comment type="domain">
    <text>The cysteine framework is VI/VII (C-C-CC-C-C).</text>
</comment>
<comment type="similarity">
    <text evidence="3">Belongs to the conotoxin O3 superfamily.</text>
</comment>
<accession>Q9BP71</accession>
<feature type="signal peptide" evidence="2">
    <location>
        <begin position="1"/>
        <end position="20"/>
    </location>
</feature>
<feature type="propeptide" id="PRO_0000404844" evidence="1">
    <location>
        <begin position="21"/>
        <end position="44"/>
    </location>
</feature>
<feature type="peptide" id="PRO_0000404845" description="Conotoxin ArMSGL-0121">
    <location>
        <begin position="47"/>
        <end position="78"/>
    </location>
</feature>
<feature type="modified residue" description="Leucine amide" evidence="1">
    <location>
        <position position="78"/>
    </location>
</feature>
<feature type="disulfide bond" evidence="1">
    <location>
        <begin position="52"/>
        <end position="64"/>
    </location>
</feature>
<feature type="disulfide bond" evidence="1">
    <location>
        <begin position="56"/>
        <end position="73"/>
    </location>
</feature>
<feature type="disulfide bond" evidence="1">
    <location>
        <begin position="63"/>
        <end position="77"/>
    </location>
</feature>
<dbReference type="EMBL" id="AF215067">
    <property type="protein sequence ID" value="AAG60495.1"/>
    <property type="molecule type" value="mRNA"/>
</dbReference>
<dbReference type="SMR" id="Q9BP71"/>
<dbReference type="ConoServer" id="754">
    <property type="toxin name" value="Ar6.21 precursor"/>
</dbReference>
<dbReference type="GO" id="GO:0005576">
    <property type="term" value="C:extracellular region"/>
    <property type="evidence" value="ECO:0007669"/>
    <property type="project" value="UniProtKB-SubCell"/>
</dbReference>
<dbReference type="GO" id="GO:0008200">
    <property type="term" value="F:ion channel inhibitor activity"/>
    <property type="evidence" value="ECO:0007669"/>
    <property type="project" value="InterPro"/>
</dbReference>
<dbReference type="GO" id="GO:0090729">
    <property type="term" value="F:toxin activity"/>
    <property type="evidence" value="ECO:0007669"/>
    <property type="project" value="UniProtKB-KW"/>
</dbReference>
<dbReference type="InterPro" id="IPR004214">
    <property type="entry name" value="Conotoxin"/>
</dbReference>
<dbReference type="Pfam" id="PF02950">
    <property type="entry name" value="Conotoxin"/>
    <property type="match status" value="1"/>
</dbReference>
<organism>
    <name type="scientific">Conus arenatus</name>
    <name type="common">Sand-dusted cone</name>
    <dbReference type="NCBI Taxonomy" id="89451"/>
    <lineage>
        <taxon>Eukaryota</taxon>
        <taxon>Metazoa</taxon>
        <taxon>Spiralia</taxon>
        <taxon>Lophotrochozoa</taxon>
        <taxon>Mollusca</taxon>
        <taxon>Gastropoda</taxon>
        <taxon>Caenogastropoda</taxon>
        <taxon>Neogastropoda</taxon>
        <taxon>Conoidea</taxon>
        <taxon>Conidae</taxon>
        <taxon>Conus</taxon>
    </lineage>
</organism>
<keyword id="KW-0027">Amidation</keyword>
<keyword id="KW-0165">Cleavage on pair of basic residues</keyword>
<keyword id="KW-1015">Disulfide bond</keyword>
<keyword id="KW-0960">Knottin</keyword>
<keyword id="KW-0528">Neurotoxin</keyword>
<keyword id="KW-0964">Secreted</keyword>
<keyword id="KW-0732">Signal</keyword>
<keyword id="KW-0800">Toxin</keyword>
<sequence length="79" mass="8946">MSRLGIMVLTLLLLVFIVTSHQDAGEKQATQRNAINFRWRRSFTRRAATEECEEYCEDEEKTCCGLEDGEPVCATTCLG</sequence>
<evidence type="ECO:0000250" key="1"/>
<evidence type="ECO:0000255" key="2"/>
<evidence type="ECO:0000305" key="3"/>
<name>O3621_CONAE</name>